<keyword id="KW-1003">Cell membrane</keyword>
<keyword id="KW-0472">Membrane</keyword>
<keyword id="KW-0520">NAD</keyword>
<keyword id="KW-0874">Quinone</keyword>
<keyword id="KW-1278">Translocase</keyword>
<keyword id="KW-0812">Transmembrane</keyword>
<keyword id="KW-1133">Transmembrane helix</keyword>
<keyword id="KW-0830">Ubiquinone</keyword>
<gene>
    <name evidence="1" type="primary">nuoH</name>
    <name type="ordered locus">BUsg_153</name>
</gene>
<protein>
    <recommendedName>
        <fullName evidence="1">NADH-quinone oxidoreductase subunit H</fullName>
        <ecNumber evidence="1">7.1.1.-</ecNumber>
    </recommendedName>
    <alternativeName>
        <fullName evidence="1">NADH dehydrogenase I subunit H</fullName>
    </alternativeName>
    <alternativeName>
        <fullName evidence="1">NDH-1 subunit H</fullName>
    </alternativeName>
</protein>
<dbReference type="EC" id="7.1.1.-" evidence="1"/>
<dbReference type="EMBL" id="AE013218">
    <property type="protein sequence ID" value="AAM67721.1"/>
    <property type="molecule type" value="Genomic_DNA"/>
</dbReference>
<dbReference type="RefSeq" id="WP_011053688.1">
    <property type="nucleotide sequence ID" value="NC_004061.1"/>
</dbReference>
<dbReference type="SMR" id="Q8K9Y1"/>
<dbReference type="STRING" id="198804.BUsg_153"/>
<dbReference type="GeneID" id="93003623"/>
<dbReference type="KEGG" id="bas:BUsg_153"/>
<dbReference type="eggNOG" id="COG1005">
    <property type="taxonomic scope" value="Bacteria"/>
</dbReference>
<dbReference type="HOGENOM" id="CLU_015134_0_1_6"/>
<dbReference type="Proteomes" id="UP000000416">
    <property type="component" value="Chromosome"/>
</dbReference>
<dbReference type="GO" id="GO:0005886">
    <property type="term" value="C:plasma membrane"/>
    <property type="evidence" value="ECO:0007669"/>
    <property type="project" value="UniProtKB-SubCell"/>
</dbReference>
<dbReference type="GO" id="GO:0003954">
    <property type="term" value="F:NADH dehydrogenase activity"/>
    <property type="evidence" value="ECO:0007669"/>
    <property type="project" value="TreeGrafter"/>
</dbReference>
<dbReference type="GO" id="GO:0016655">
    <property type="term" value="F:oxidoreductase activity, acting on NAD(P)H, quinone or similar compound as acceptor"/>
    <property type="evidence" value="ECO:0007669"/>
    <property type="project" value="UniProtKB-UniRule"/>
</dbReference>
<dbReference type="GO" id="GO:0048038">
    <property type="term" value="F:quinone binding"/>
    <property type="evidence" value="ECO:0007669"/>
    <property type="project" value="UniProtKB-KW"/>
</dbReference>
<dbReference type="GO" id="GO:0009060">
    <property type="term" value="P:aerobic respiration"/>
    <property type="evidence" value="ECO:0007669"/>
    <property type="project" value="TreeGrafter"/>
</dbReference>
<dbReference type="HAMAP" id="MF_01350">
    <property type="entry name" value="NDH1_NuoH"/>
    <property type="match status" value="1"/>
</dbReference>
<dbReference type="InterPro" id="IPR001694">
    <property type="entry name" value="NADH_UbQ_OxRdtase_su1/FPO"/>
</dbReference>
<dbReference type="InterPro" id="IPR018086">
    <property type="entry name" value="NADH_UbQ_OxRdtase_su1_CS"/>
</dbReference>
<dbReference type="NCBIfam" id="NF004740">
    <property type="entry name" value="PRK06076.1-1"/>
    <property type="match status" value="1"/>
</dbReference>
<dbReference type="NCBIfam" id="NF004741">
    <property type="entry name" value="PRK06076.1-2"/>
    <property type="match status" value="1"/>
</dbReference>
<dbReference type="PANTHER" id="PTHR11432">
    <property type="entry name" value="NADH DEHYDROGENASE SUBUNIT 1"/>
    <property type="match status" value="1"/>
</dbReference>
<dbReference type="PANTHER" id="PTHR11432:SF3">
    <property type="entry name" value="NADH-UBIQUINONE OXIDOREDUCTASE CHAIN 1"/>
    <property type="match status" value="1"/>
</dbReference>
<dbReference type="Pfam" id="PF00146">
    <property type="entry name" value="NADHdh"/>
    <property type="match status" value="1"/>
</dbReference>
<dbReference type="PROSITE" id="PS00667">
    <property type="entry name" value="COMPLEX1_ND1_1"/>
    <property type="match status" value="1"/>
</dbReference>
<dbReference type="PROSITE" id="PS00668">
    <property type="entry name" value="COMPLEX1_ND1_2"/>
    <property type="match status" value="1"/>
</dbReference>
<feature type="chain" id="PRO_0000117527" description="NADH-quinone oxidoreductase subunit H">
    <location>
        <begin position="1"/>
        <end position="322"/>
    </location>
</feature>
<feature type="transmembrane region" description="Helical" evidence="1">
    <location>
        <begin position="15"/>
        <end position="35"/>
    </location>
</feature>
<feature type="transmembrane region" description="Helical" evidence="1">
    <location>
        <begin position="82"/>
        <end position="102"/>
    </location>
</feature>
<feature type="transmembrane region" description="Helical" evidence="1">
    <location>
        <begin position="114"/>
        <end position="134"/>
    </location>
</feature>
<feature type="transmembrane region" description="Helical" evidence="1">
    <location>
        <begin position="149"/>
        <end position="169"/>
    </location>
</feature>
<feature type="transmembrane region" description="Helical" evidence="1">
    <location>
        <begin position="186"/>
        <end position="206"/>
    </location>
</feature>
<feature type="transmembrane region" description="Helical" evidence="1">
    <location>
        <begin position="243"/>
        <end position="263"/>
    </location>
</feature>
<feature type="transmembrane region" description="Helical" evidence="1">
    <location>
        <begin position="265"/>
        <end position="285"/>
    </location>
</feature>
<feature type="transmembrane region" description="Helical" evidence="1">
    <location>
        <begin position="302"/>
        <end position="322"/>
    </location>
</feature>
<reference key="1">
    <citation type="journal article" date="2002" name="Science">
        <title>50 million years of genomic stasis in endosymbiotic bacteria.</title>
        <authorList>
            <person name="Tamas I."/>
            <person name="Klasson L."/>
            <person name="Canbaeck B."/>
            <person name="Naeslund A.K."/>
            <person name="Eriksson A.-S."/>
            <person name="Wernegreen J.J."/>
            <person name="Sandstroem J.P."/>
            <person name="Moran N.A."/>
            <person name="Andersson S.G.E."/>
        </authorList>
    </citation>
    <scope>NUCLEOTIDE SEQUENCE [LARGE SCALE GENOMIC DNA]</scope>
    <source>
        <strain>Sg</strain>
    </source>
</reference>
<organism>
    <name type="scientific">Buchnera aphidicola subsp. Schizaphis graminum (strain Sg)</name>
    <dbReference type="NCBI Taxonomy" id="198804"/>
    <lineage>
        <taxon>Bacteria</taxon>
        <taxon>Pseudomonadati</taxon>
        <taxon>Pseudomonadota</taxon>
        <taxon>Gammaproteobacteria</taxon>
        <taxon>Enterobacterales</taxon>
        <taxon>Erwiniaceae</taxon>
        <taxon>Buchnera</taxon>
    </lineage>
</organism>
<name>NUOH_BUCAP</name>
<accession>Q8K9Y1</accession>
<sequence>MNSLGINIYEILFQILHITLIIIFIIFFAATLSILERKFLAFFQNRHGPNRVGWFGSLQLCADMIKILFKEDWVPQFSKKSIFILSPIIAFVSLLLVIPTIPFTPNFLIINLNIGILFFLMMASLSVYAVLFAGWSSNNKYSLLGAIRASAQTLSYEVFLGLSLMGVIARSGSFNIVDIVNSQKEVWNVIPQFFGFLCFFIAGIALCHRHPFDQPESEQELADGYHIEYSGMKFGLFFIGEYISIITVSALISTVFFGGYFGFWGSSFFWLFLKTVFFILIFILIRASLPRPKYDQIMSFGWKICLPLTLLNLIITAFFILI</sequence>
<comment type="function">
    <text evidence="1">NDH-1 shuttles electrons from NADH, via FMN and iron-sulfur (Fe-S) centers, to quinones in the respiratory chain. The immediate electron acceptor for the enzyme in this species is believed to be ubiquinone. Couples the redox reaction to proton translocation (for every two electrons transferred, four hydrogen ions are translocated across the cytoplasmic membrane), and thus conserves the redox energy in a proton gradient. This subunit may bind ubiquinone.</text>
</comment>
<comment type="catalytic activity">
    <reaction evidence="1">
        <text>a quinone + NADH + 5 H(+)(in) = a quinol + NAD(+) + 4 H(+)(out)</text>
        <dbReference type="Rhea" id="RHEA:57888"/>
        <dbReference type="ChEBI" id="CHEBI:15378"/>
        <dbReference type="ChEBI" id="CHEBI:24646"/>
        <dbReference type="ChEBI" id="CHEBI:57540"/>
        <dbReference type="ChEBI" id="CHEBI:57945"/>
        <dbReference type="ChEBI" id="CHEBI:132124"/>
    </reaction>
</comment>
<comment type="subunit">
    <text evidence="1">NDH-1 is composed of 13 different subunits. Subunits NuoA, H, J, K, L, M, N constitute the membrane sector of the complex.</text>
</comment>
<comment type="subcellular location">
    <subcellularLocation>
        <location>Cell membrane</location>
        <topology>Multi-pass membrane protein</topology>
    </subcellularLocation>
</comment>
<comment type="similarity">
    <text evidence="1">Belongs to the complex I subunit 1 family.</text>
</comment>
<proteinExistence type="inferred from homology"/>
<evidence type="ECO:0000255" key="1">
    <source>
        <dbReference type="HAMAP-Rule" id="MF_01350"/>
    </source>
</evidence>